<protein>
    <recommendedName>
        <fullName evidence="1">Large ribosomal subunit protein uL29</fullName>
    </recommendedName>
    <alternativeName>
        <fullName evidence="2">50S ribosomal protein L29</fullName>
    </alternativeName>
</protein>
<proteinExistence type="inferred from homology"/>
<organism>
    <name type="scientific">Vibrio vulnificus (strain CMCP6)</name>
    <dbReference type="NCBI Taxonomy" id="216895"/>
    <lineage>
        <taxon>Bacteria</taxon>
        <taxon>Pseudomonadati</taxon>
        <taxon>Pseudomonadota</taxon>
        <taxon>Gammaproteobacteria</taxon>
        <taxon>Vibrionales</taxon>
        <taxon>Vibrionaceae</taxon>
        <taxon>Vibrio</taxon>
    </lineage>
</organism>
<comment type="similarity">
    <text evidence="1">Belongs to the universal ribosomal protein uL29 family.</text>
</comment>
<feature type="chain" id="PRO_0000130494" description="Large ribosomal subunit protein uL29">
    <location>
        <begin position="1"/>
        <end position="63"/>
    </location>
</feature>
<evidence type="ECO:0000255" key="1">
    <source>
        <dbReference type="HAMAP-Rule" id="MF_00374"/>
    </source>
</evidence>
<evidence type="ECO:0000305" key="2"/>
<keyword id="KW-0687">Ribonucleoprotein</keyword>
<keyword id="KW-0689">Ribosomal protein</keyword>
<name>RL29_VIBVU</name>
<sequence length="63" mass="7191">MKAQDLREKSVEELNSELLNLLREQFNLRMQAATGQLQQTHTLKAVRRDIARVKTVLTEKAGA</sequence>
<gene>
    <name evidence="1" type="primary">rpmC</name>
    <name type="ordered locus">VV1_0754</name>
</gene>
<reference key="1">
    <citation type="submission" date="2002-12" db="EMBL/GenBank/DDBJ databases">
        <title>Complete genome sequence of Vibrio vulnificus CMCP6.</title>
        <authorList>
            <person name="Rhee J.H."/>
            <person name="Kim S.Y."/>
            <person name="Chung S.S."/>
            <person name="Kim J.J."/>
            <person name="Moon Y.H."/>
            <person name="Jeong H."/>
            <person name="Choy H.E."/>
        </authorList>
    </citation>
    <scope>NUCLEOTIDE SEQUENCE [LARGE SCALE GENOMIC DNA]</scope>
    <source>
        <strain>CMCP6</strain>
    </source>
</reference>
<dbReference type="EMBL" id="AE016795">
    <property type="protein sequence ID" value="AAO09262.1"/>
    <property type="molecule type" value="Genomic_DNA"/>
</dbReference>
<dbReference type="RefSeq" id="WP_011078825.1">
    <property type="nucleotide sequence ID" value="NC_004459.3"/>
</dbReference>
<dbReference type="SMR" id="Q8DE47"/>
<dbReference type="GeneID" id="93895058"/>
<dbReference type="KEGG" id="vvu:VV1_0754"/>
<dbReference type="HOGENOM" id="CLU_158491_1_2_6"/>
<dbReference type="Proteomes" id="UP000002275">
    <property type="component" value="Chromosome 1"/>
</dbReference>
<dbReference type="GO" id="GO:0022625">
    <property type="term" value="C:cytosolic large ribosomal subunit"/>
    <property type="evidence" value="ECO:0007669"/>
    <property type="project" value="TreeGrafter"/>
</dbReference>
<dbReference type="GO" id="GO:0003735">
    <property type="term" value="F:structural constituent of ribosome"/>
    <property type="evidence" value="ECO:0007669"/>
    <property type="project" value="InterPro"/>
</dbReference>
<dbReference type="GO" id="GO:0006412">
    <property type="term" value="P:translation"/>
    <property type="evidence" value="ECO:0007669"/>
    <property type="project" value="UniProtKB-UniRule"/>
</dbReference>
<dbReference type="CDD" id="cd00427">
    <property type="entry name" value="Ribosomal_L29_HIP"/>
    <property type="match status" value="1"/>
</dbReference>
<dbReference type="FunFam" id="1.10.287.310:FF:000001">
    <property type="entry name" value="50S ribosomal protein L29"/>
    <property type="match status" value="1"/>
</dbReference>
<dbReference type="Gene3D" id="1.10.287.310">
    <property type="match status" value="1"/>
</dbReference>
<dbReference type="HAMAP" id="MF_00374">
    <property type="entry name" value="Ribosomal_uL29"/>
    <property type="match status" value="1"/>
</dbReference>
<dbReference type="InterPro" id="IPR050063">
    <property type="entry name" value="Ribosomal_protein_uL29"/>
</dbReference>
<dbReference type="InterPro" id="IPR001854">
    <property type="entry name" value="Ribosomal_uL29"/>
</dbReference>
<dbReference type="InterPro" id="IPR018254">
    <property type="entry name" value="Ribosomal_uL29_CS"/>
</dbReference>
<dbReference type="InterPro" id="IPR036049">
    <property type="entry name" value="Ribosomal_uL29_sf"/>
</dbReference>
<dbReference type="NCBIfam" id="TIGR00012">
    <property type="entry name" value="L29"/>
    <property type="match status" value="1"/>
</dbReference>
<dbReference type="PANTHER" id="PTHR10916">
    <property type="entry name" value="60S RIBOSOMAL PROTEIN L35/50S RIBOSOMAL PROTEIN L29"/>
    <property type="match status" value="1"/>
</dbReference>
<dbReference type="PANTHER" id="PTHR10916:SF0">
    <property type="entry name" value="LARGE RIBOSOMAL SUBUNIT PROTEIN UL29C"/>
    <property type="match status" value="1"/>
</dbReference>
<dbReference type="Pfam" id="PF00831">
    <property type="entry name" value="Ribosomal_L29"/>
    <property type="match status" value="1"/>
</dbReference>
<dbReference type="SUPFAM" id="SSF46561">
    <property type="entry name" value="Ribosomal protein L29 (L29p)"/>
    <property type="match status" value="1"/>
</dbReference>
<dbReference type="PROSITE" id="PS00579">
    <property type="entry name" value="RIBOSOMAL_L29"/>
    <property type="match status" value="1"/>
</dbReference>
<accession>Q8DE47</accession>